<accession>Q86A05</accession>
<accession>Q552T1</accession>
<protein>
    <recommendedName>
        <fullName>Putative acetyltransferase DDB_G0275507</fullName>
        <ecNumber>2.3.1.-</ecNumber>
    </recommendedName>
</protein>
<proteinExistence type="inferred from homology"/>
<keyword id="KW-0012">Acyltransferase</keyword>
<keyword id="KW-1185">Reference proteome</keyword>
<keyword id="KW-0808">Transferase</keyword>
<comment type="similarity">
    <text evidence="1">Belongs to the transferase hexapeptide repeat family.</text>
</comment>
<feature type="chain" id="PRO_0000367260" description="Putative acetyltransferase DDB_G0275507">
    <location>
        <begin position="1"/>
        <end position="196"/>
    </location>
</feature>
<name>Y5507_DICDI</name>
<organism>
    <name type="scientific">Dictyostelium discoideum</name>
    <name type="common">Social amoeba</name>
    <dbReference type="NCBI Taxonomy" id="44689"/>
    <lineage>
        <taxon>Eukaryota</taxon>
        <taxon>Amoebozoa</taxon>
        <taxon>Evosea</taxon>
        <taxon>Eumycetozoa</taxon>
        <taxon>Dictyostelia</taxon>
        <taxon>Dictyosteliales</taxon>
        <taxon>Dictyosteliaceae</taxon>
        <taxon>Dictyostelium</taxon>
    </lineage>
</organism>
<evidence type="ECO:0000305" key="1"/>
<gene>
    <name type="ORF">DDB_G0275507</name>
</gene>
<dbReference type="EC" id="2.3.1.-"/>
<dbReference type="EMBL" id="AAFI02000013">
    <property type="protein sequence ID" value="EAL69504.1"/>
    <property type="molecule type" value="Genomic_DNA"/>
</dbReference>
<dbReference type="RefSeq" id="XP_643600.1">
    <property type="nucleotide sequence ID" value="XM_638508.1"/>
</dbReference>
<dbReference type="SMR" id="Q86A05"/>
<dbReference type="FunCoup" id="Q86A05">
    <property type="interactions" value="148"/>
</dbReference>
<dbReference type="STRING" id="44689.Q86A05"/>
<dbReference type="PaxDb" id="44689-DDB0167177"/>
<dbReference type="EnsemblProtists" id="EAL69504">
    <property type="protein sequence ID" value="EAL69504"/>
    <property type="gene ID" value="DDB_G0275507"/>
</dbReference>
<dbReference type="GeneID" id="8620187"/>
<dbReference type="KEGG" id="ddi:DDB_G0275507"/>
<dbReference type="dictyBase" id="DDB_G0275507"/>
<dbReference type="VEuPathDB" id="AmoebaDB:DDB_G0275507"/>
<dbReference type="eggNOG" id="KOG4750">
    <property type="taxonomic scope" value="Eukaryota"/>
</dbReference>
<dbReference type="HOGENOM" id="CLU_051638_3_1_1"/>
<dbReference type="InParanoid" id="Q86A05"/>
<dbReference type="OMA" id="GSPCRVK"/>
<dbReference type="PhylomeDB" id="Q86A05"/>
<dbReference type="PRO" id="PR:Q86A05"/>
<dbReference type="Proteomes" id="UP000002195">
    <property type="component" value="Chromosome 2"/>
</dbReference>
<dbReference type="GO" id="GO:0016407">
    <property type="term" value="F:acetyltransferase activity"/>
    <property type="evidence" value="ECO:0007669"/>
    <property type="project" value="InterPro"/>
</dbReference>
<dbReference type="GO" id="GO:0008374">
    <property type="term" value="F:O-acyltransferase activity"/>
    <property type="evidence" value="ECO:0000318"/>
    <property type="project" value="GO_Central"/>
</dbReference>
<dbReference type="CDD" id="cd03357">
    <property type="entry name" value="LbH_MAT_GAT"/>
    <property type="match status" value="1"/>
</dbReference>
<dbReference type="FunFam" id="2.160.10.10:FF:000025">
    <property type="entry name" value="Hexapeptide-repeat containing-acetyltransferase"/>
    <property type="match status" value="1"/>
</dbReference>
<dbReference type="Gene3D" id="2.160.10.10">
    <property type="entry name" value="Hexapeptide repeat proteins"/>
    <property type="match status" value="1"/>
</dbReference>
<dbReference type="InterPro" id="IPR001451">
    <property type="entry name" value="Hexapep"/>
</dbReference>
<dbReference type="InterPro" id="IPR051159">
    <property type="entry name" value="Hexapeptide_acetyltransf"/>
</dbReference>
<dbReference type="InterPro" id="IPR024688">
    <property type="entry name" value="Mac_dom"/>
</dbReference>
<dbReference type="InterPro" id="IPR011004">
    <property type="entry name" value="Trimer_LpxA-like_sf"/>
</dbReference>
<dbReference type="PANTHER" id="PTHR23416:SF23">
    <property type="entry name" value="ACETYLTRANSFERASE C18B11.09C-RELATED"/>
    <property type="match status" value="1"/>
</dbReference>
<dbReference type="PANTHER" id="PTHR23416">
    <property type="entry name" value="SIALIC ACID SYNTHASE-RELATED"/>
    <property type="match status" value="1"/>
</dbReference>
<dbReference type="Pfam" id="PF00132">
    <property type="entry name" value="Hexapep"/>
    <property type="match status" value="1"/>
</dbReference>
<dbReference type="Pfam" id="PF12464">
    <property type="entry name" value="Mac"/>
    <property type="match status" value="1"/>
</dbReference>
<dbReference type="SMART" id="SM01266">
    <property type="entry name" value="Mac"/>
    <property type="match status" value="1"/>
</dbReference>
<dbReference type="SUPFAM" id="SSF51161">
    <property type="entry name" value="Trimeric LpxA-like enzymes"/>
    <property type="match status" value="1"/>
</dbReference>
<sequence>MEPVLTEREKMVTGLRYRFEDPELDQLRLRARRLNKQFNNLIGSDEDDGKKGPEIIKQLFGSTGEIVIVREGIKVSYGVNIHVGDKFFINHNCILNDDGPIRIGYGAMIGPNSQLYTATHPFEPSERIGGSDENFTKGITIGDNFWGGGNVIILPGVTLGNNVIVGAGSVVTKSFPDNSIIAGNPAKLIRMNIPTK</sequence>
<reference key="1">
    <citation type="journal article" date="2002" name="Nature">
        <title>Sequence and analysis of chromosome 2 of Dictyostelium discoideum.</title>
        <authorList>
            <person name="Gloeckner G."/>
            <person name="Eichinger L."/>
            <person name="Szafranski K."/>
            <person name="Pachebat J.A."/>
            <person name="Bankier A.T."/>
            <person name="Dear P.H."/>
            <person name="Lehmann R."/>
            <person name="Baumgart C."/>
            <person name="Parra G."/>
            <person name="Abril J.F."/>
            <person name="Guigo R."/>
            <person name="Kumpf K."/>
            <person name="Tunggal B."/>
            <person name="Cox E.C."/>
            <person name="Quail M.A."/>
            <person name="Platzer M."/>
            <person name="Rosenthal A."/>
            <person name="Noegel A.A."/>
        </authorList>
    </citation>
    <scope>NUCLEOTIDE SEQUENCE [LARGE SCALE GENOMIC DNA]</scope>
    <source>
        <strain>AX4</strain>
    </source>
</reference>
<reference key="2">
    <citation type="journal article" date="2005" name="Nature">
        <title>The genome of the social amoeba Dictyostelium discoideum.</title>
        <authorList>
            <person name="Eichinger L."/>
            <person name="Pachebat J.A."/>
            <person name="Gloeckner G."/>
            <person name="Rajandream M.A."/>
            <person name="Sucgang R."/>
            <person name="Berriman M."/>
            <person name="Song J."/>
            <person name="Olsen R."/>
            <person name="Szafranski K."/>
            <person name="Xu Q."/>
            <person name="Tunggal B."/>
            <person name="Kummerfeld S."/>
            <person name="Madera M."/>
            <person name="Konfortov B.A."/>
            <person name="Rivero F."/>
            <person name="Bankier A.T."/>
            <person name="Lehmann R."/>
            <person name="Hamlin N."/>
            <person name="Davies R."/>
            <person name="Gaudet P."/>
            <person name="Fey P."/>
            <person name="Pilcher K."/>
            <person name="Chen G."/>
            <person name="Saunders D."/>
            <person name="Sodergren E.J."/>
            <person name="Davis P."/>
            <person name="Kerhornou A."/>
            <person name="Nie X."/>
            <person name="Hall N."/>
            <person name="Anjard C."/>
            <person name="Hemphill L."/>
            <person name="Bason N."/>
            <person name="Farbrother P."/>
            <person name="Desany B."/>
            <person name="Just E."/>
            <person name="Morio T."/>
            <person name="Rost R."/>
            <person name="Churcher C.M."/>
            <person name="Cooper J."/>
            <person name="Haydock S."/>
            <person name="van Driessche N."/>
            <person name="Cronin A."/>
            <person name="Goodhead I."/>
            <person name="Muzny D.M."/>
            <person name="Mourier T."/>
            <person name="Pain A."/>
            <person name="Lu M."/>
            <person name="Harper D."/>
            <person name="Lindsay R."/>
            <person name="Hauser H."/>
            <person name="James K.D."/>
            <person name="Quiles M."/>
            <person name="Madan Babu M."/>
            <person name="Saito T."/>
            <person name="Buchrieser C."/>
            <person name="Wardroper A."/>
            <person name="Felder M."/>
            <person name="Thangavelu M."/>
            <person name="Johnson D."/>
            <person name="Knights A."/>
            <person name="Loulseged H."/>
            <person name="Mungall K.L."/>
            <person name="Oliver K."/>
            <person name="Price C."/>
            <person name="Quail M.A."/>
            <person name="Urushihara H."/>
            <person name="Hernandez J."/>
            <person name="Rabbinowitsch E."/>
            <person name="Steffen D."/>
            <person name="Sanders M."/>
            <person name="Ma J."/>
            <person name="Kohara Y."/>
            <person name="Sharp S."/>
            <person name="Simmonds M.N."/>
            <person name="Spiegler S."/>
            <person name="Tivey A."/>
            <person name="Sugano S."/>
            <person name="White B."/>
            <person name="Walker D."/>
            <person name="Woodward J.R."/>
            <person name="Winckler T."/>
            <person name="Tanaka Y."/>
            <person name="Shaulsky G."/>
            <person name="Schleicher M."/>
            <person name="Weinstock G.M."/>
            <person name="Rosenthal A."/>
            <person name="Cox E.C."/>
            <person name="Chisholm R.L."/>
            <person name="Gibbs R.A."/>
            <person name="Loomis W.F."/>
            <person name="Platzer M."/>
            <person name="Kay R.R."/>
            <person name="Williams J.G."/>
            <person name="Dear P.H."/>
            <person name="Noegel A.A."/>
            <person name="Barrell B.G."/>
            <person name="Kuspa A."/>
        </authorList>
    </citation>
    <scope>NUCLEOTIDE SEQUENCE [LARGE SCALE GENOMIC DNA]</scope>
    <source>
        <strain>AX4</strain>
    </source>
</reference>